<gene>
    <name evidence="1" type="primary">rlmN</name>
    <name type="ordered locus">Cpha266_1539</name>
</gene>
<dbReference type="EC" id="2.1.1.192" evidence="1"/>
<dbReference type="EMBL" id="CP000492">
    <property type="protein sequence ID" value="ABL65561.1"/>
    <property type="molecule type" value="Genomic_DNA"/>
</dbReference>
<dbReference type="RefSeq" id="WP_011745373.1">
    <property type="nucleotide sequence ID" value="NC_008639.1"/>
</dbReference>
<dbReference type="SMR" id="A1BGN4"/>
<dbReference type="STRING" id="290317.Cpha266_1539"/>
<dbReference type="KEGG" id="cph:Cpha266_1539"/>
<dbReference type="eggNOG" id="COG0820">
    <property type="taxonomic scope" value="Bacteria"/>
</dbReference>
<dbReference type="HOGENOM" id="CLU_029101_2_0_10"/>
<dbReference type="OrthoDB" id="9793973at2"/>
<dbReference type="Proteomes" id="UP000008701">
    <property type="component" value="Chromosome"/>
</dbReference>
<dbReference type="GO" id="GO:0005737">
    <property type="term" value="C:cytoplasm"/>
    <property type="evidence" value="ECO:0007669"/>
    <property type="project" value="UniProtKB-SubCell"/>
</dbReference>
<dbReference type="GO" id="GO:0051539">
    <property type="term" value="F:4 iron, 4 sulfur cluster binding"/>
    <property type="evidence" value="ECO:0007669"/>
    <property type="project" value="UniProtKB-UniRule"/>
</dbReference>
<dbReference type="GO" id="GO:0046872">
    <property type="term" value="F:metal ion binding"/>
    <property type="evidence" value="ECO:0007669"/>
    <property type="project" value="UniProtKB-KW"/>
</dbReference>
<dbReference type="GO" id="GO:0070040">
    <property type="term" value="F:rRNA (adenine(2503)-C2-)-methyltransferase activity"/>
    <property type="evidence" value="ECO:0007669"/>
    <property type="project" value="UniProtKB-UniRule"/>
</dbReference>
<dbReference type="GO" id="GO:0019843">
    <property type="term" value="F:rRNA binding"/>
    <property type="evidence" value="ECO:0007669"/>
    <property type="project" value="UniProtKB-UniRule"/>
</dbReference>
<dbReference type="GO" id="GO:0002935">
    <property type="term" value="F:tRNA (adenine(37)-C2)-methyltransferase activity"/>
    <property type="evidence" value="ECO:0007669"/>
    <property type="project" value="UniProtKB-UniRule"/>
</dbReference>
<dbReference type="GO" id="GO:0000049">
    <property type="term" value="F:tRNA binding"/>
    <property type="evidence" value="ECO:0007669"/>
    <property type="project" value="UniProtKB-UniRule"/>
</dbReference>
<dbReference type="GO" id="GO:0070475">
    <property type="term" value="P:rRNA base methylation"/>
    <property type="evidence" value="ECO:0007669"/>
    <property type="project" value="UniProtKB-UniRule"/>
</dbReference>
<dbReference type="GO" id="GO:0030488">
    <property type="term" value="P:tRNA methylation"/>
    <property type="evidence" value="ECO:0007669"/>
    <property type="project" value="UniProtKB-UniRule"/>
</dbReference>
<dbReference type="CDD" id="cd01335">
    <property type="entry name" value="Radical_SAM"/>
    <property type="match status" value="1"/>
</dbReference>
<dbReference type="FunFam" id="3.20.20.70:FF:000014">
    <property type="entry name" value="Probable dual-specificity RNA methyltransferase RlmN"/>
    <property type="match status" value="1"/>
</dbReference>
<dbReference type="Gene3D" id="1.10.150.530">
    <property type="match status" value="1"/>
</dbReference>
<dbReference type="Gene3D" id="3.20.20.70">
    <property type="entry name" value="Aldolase class I"/>
    <property type="match status" value="1"/>
</dbReference>
<dbReference type="HAMAP" id="MF_01849">
    <property type="entry name" value="RNA_methyltr_RlmN"/>
    <property type="match status" value="1"/>
</dbReference>
<dbReference type="InterPro" id="IPR013785">
    <property type="entry name" value="Aldolase_TIM"/>
</dbReference>
<dbReference type="InterPro" id="IPR040072">
    <property type="entry name" value="Methyltransferase_A"/>
</dbReference>
<dbReference type="InterPro" id="IPR048641">
    <property type="entry name" value="RlmN_N"/>
</dbReference>
<dbReference type="InterPro" id="IPR027492">
    <property type="entry name" value="RNA_MTrfase_RlmN"/>
</dbReference>
<dbReference type="InterPro" id="IPR004383">
    <property type="entry name" value="rRNA_lsu_MTrfase_RlmN/Cfr"/>
</dbReference>
<dbReference type="InterPro" id="IPR007197">
    <property type="entry name" value="rSAM"/>
</dbReference>
<dbReference type="NCBIfam" id="TIGR00048">
    <property type="entry name" value="rRNA_mod_RlmN"/>
    <property type="match status" value="1"/>
</dbReference>
<dbReference type="PANTHER" id="PTHR30544">
    <property type="entry name" value="23S RRNA METHYLTRANSFERASE"/>
    <property type="match status" value="1"/>
</dbReference>
<dbReference type="PANTHER" id="PTHR30544:SF5">
    <property type="entry name" value="RADICAL SAM CORE DOMAIN-CONTAINING PROTEIN"/>
    <property type="match status" value="1"/>
</dbReference>
<dbReference type="Pfam" id="PF04055">
    <property type="entry name" value="Radical_SAM"/>
    <property type="match status" value="1"/>
</dbReference>
<dbReference type="Pfam" id="PF21016">
    <property type="entry name" value="RlmN_N"/>
    <property type="match status" value="1"/>
</dbReference>
<dbReference type="PIRSF" id="PIRSF006004">
    <property type="entry name" value="CHP00048"/>
    <property type="match status" value="1"/>
</dbReference>
<dbReference type="SFLD" id="SFLDF00275">
    <property type="entry name" value="adenosine_C2_methyltransferase"/>
    <property type="match status" value="1"/>
</dbReference>
<dbReference type="SFLD" id="SFLDG01062">
    <property type="entry name" value="methyltransferase_(Class_A)"/>
    <property type="match status" value="1"/>
</dbReference>
<dbReference type="SUPFAM" id="SSF102114">
    <property type="entry name" value="Radical SAM enzymes"/>
    <property type="match status" value="1"/>
</dbReference>
<dbReference type="PROSITE" id="PS51918">
    <property type="entry name" value="RADICAL_SAM"/>
    <property type="match status" value="1"/>
</dbReference>
<proteinExistence type="inferred from homology"/>
<name>RLMN_CHLPD</name>
<feature type="chain" id="PRO_0000350103" description="Probable dual-specificity RNA methyltransferase RlmN">
    <location>
        <begin position="1"/>
        <end position="363"/>
    </location>
</feature>
<feature type="domain" description="Radical SAM core" evidence="2">
    <location>
        <begin position="105"/>
        <end position="341"/>
    </location>
</feature>
<feature type="active site" description="Proton acceptor" evidence="1">
    <location>
        <position position="99"/>
    </location>
</feature>
<feature type="active site" description="S-methylcysteine intermediate" evidence="1">
    <location>
        <position position="346"/>
    </location>
</feature>
<feature type="binding site" evidence="1">
    <location>
        <position position="119"/>
    </location>
    <ligand>
        <name>[4Fe-4S] cluster</name>
        <dbReference type="ChEBI" id="CHEBI:49883"/>
        <note>4Fe-4S-S-AdoMet</note>
    </ligand>
</feature>
<feature type="binding site" evidence="1">
    <location>
        <position position="123"/>
    </location>
    <ligand>
        <name>[4Fe-4S] cluster</name>
        <dbReference type="ChEBI" id="CHEBI:49883"/>
        <note>4Fe-4S-S-AdoMet</note>
    </ligand>
</feature>
<feature type="binding site" evidence="1">
    <location>
        <position position="126"/>
    </location>
    <ligand>
        <name>[4Fe-4S] cluster</name>
        <dbReference type="ChEBI" id="CHEBI:49883"/>
        <note>4Fe-4S-S-AdoMet</note>
    </ligand>
</feature>
<feature type="binding site" evidence="1">
    <location>
        <begin position="171"/>
        <end position="172"/>
    </location>
    <ligand>
        <name>S-adenosyl-L-methionine</name>
        <dbReference type="ChEBI" id="CHEBI:59789"/>
    </ligand>
</feature>
<feature type="binding site" evidence="1">
    <location>
        <position position="204"/>
    </location>
    <ligand>
        <name>S-adenosyl-L-methionine</name>
        <dbReference type="ChEBI" id="CHEBI:59789"/>
    </ligand>
</feature>
<feature type="binding site" evidence="1">
    <location>
        <begin position="227"/>
        <end position="229"/>
    </location>
    <ligand>
        <name>S-adenosyl-L-methionine</name>
        <dbReference type="ChEBI" id="CHEBI:59789"/>
    </ligand>
</feature>
<feature type="binding site" evidence="1">
    <location>
        <position position="303"/>
    </location>
    <ligand>
        <name>S-adenosyl-L-methionine</name>
        <dbReference type="ChEBI" id="CHEBI:59789"/>
    </ligand>
</feature>
<feature type="disulfide bond" description="(transient)" evidence="1">
    <location>
        <begin position="112"/>
        <end position="346"/>
    </location>
</feature>
<keyword id="KW-0004">4Fe-4S</keyword>
<keyword id="KW-0963">Cytoplasm</keyword>
<keyword id="KW-1015">Disulfide bond</keyword>
<keyword id="KW-0408">Iron</keyword>
<keyword id="KW-0411">Iron-sulfur</keyword>
<keyword id="KW-0479">Metal-binding</keyword>
<keyword id="KW-0489">Methyltransferase</keyword>
<keyword id="KW-1185">Reference proteome</keyword>
<keyword id="KW-0698">rRNA processing</keyword>
<keyword id="KW-0949">S-adenosyl-L-methionine</keyword>
<keyword id="KW-0808">Transferase</keyword>
<keyword id="KW-0819">tRNA processing</keyword>
<reference key="1">
    <citation type="submission" date="2006-12" db="EMBL/GenBank/DDBJ databases">
        <title>Complete sequence of Chlorobium phaeobacteroides DSM 266.</title>
        <authorList>
            <consortium name="US DOE Joint Genome Institute"/>
            <person name="Copeland A."/>
            <person name="Lucas S."/>
            <person name="Lapidus A."/>
            <person name="Barry K."/>
            <person name="Detter J.C."/>
            <person name="Glavina del Rio T."/>
            <person name="Hammon N."/>
            <person name="Israni S."/>
            <person name="Pitluck S."/>
            <person name="Goltsman E."/>
            <person name="Schmutz J."/>
            <person name="Larimer F."/>
            <person name="Land M."/>
            <person name="Hauser L."/>
            <person name="Mikhailova N."/>
            <person name="Li T."/>
            <person name="Overmann J."/>
            <person name="Bryant D.A."/>
            <person name="Richardson P."/>
        </authorList>
    </citation>
    <scope>NUCLEOTIDE SEQUENCE [LARGE SCALE GENOMIC DNA]</scope>
    <source>
        <strain>DSM 266 / SMG 266 / 2430</strain>
    </source>
</reference>
<accession>A1BGN4</accession>
<protein>
    <recommendedName>
        <fullName evidence="1">Probable dual-specificity RNA methyltransferase RlmN</fullName>
        <ecNumber evidence="1">2.1.1.192</ecNumber>
    </recommendedName>
    <alternativeName>
        <fullName evidence="1">23S rRNA (adenine(2503)-C(2))-methyltransferase</fullName>
    </alternativeName>
    <alternativeName>
        <fullName evidence="1">23S rRNA m2A2503 methyltransferase</fullName>
    </alternativeName>
    <alternativeName>
        <fullName evidence="1">Ribosomal RNA large subunit methyltransferase N</fullName>
    </alternativeName>
    <alternativeName>
        <fullName evidence="1">tRNA (adenine(37)-C(2))-methyltransferase</fullName>
    </alternativeName>
    <alternativeName>
        <fullName evidence="1">tRNA m2A37 methyltransferase</fullName>
    </alternativeName>
</protein>
<sequence length="363" mass="40745">MQTRLSNIKHLSRQELRQAIANLGEPAYRTRQIHQWIFSHRAATFEEMTTISLELRNKLADQFRIGFPILADCQQDGSANDPFSTVKLLLELDDNEKIETVLIPSENRMTACVSSQVGCPLQCRFCASGQTGFKRNLSADEIIDQVFSLNDFIRTKHESNEITNIVFMGMGEPLLNFENLKESIEVLSDQSYKFNLPQRKITISTVGIIPGINELGKSGLKTKLAISLHSASQETRESLIPVASEFSLTQLRKTLSEYTSQTGEPVTLVYMLLKGINDSVEDARLLVKFSRSFLCKINLIDYNSIINMKFKPVFNETKDMFIQHILDAGIHVTVRKSHGASINAACGQLAAKGTQKAENRNNL</sequence>
<comment type="function">
    <text evidence="1">Specifically methylates position 2 of adenine 2503 in 23S rRNA and position 2 of adenine 37 in tRNAs.</text>
</comment>
<comment type="catalytic activity">
    <reaction evidence="1">
        <text>adenosine(2503) in 23S rRNA + 2 reduced [2Fe-2S]-[ferredoxin] + 2 S-adenosyl-L-methionine = 2-methyladenosine(2503) in 23S rRNA + 5'-deoxyadenosine + L-methionine + 2 oxidized [2Fe-2S]-[ferredoxin] + S-adenosyl-L-homocysteine</text>
        <dbReference type="Rhea" id="RHEA:42916"/>
        <dbReference type="Rhea" id="RHEA-COMP:10000"/>
        <dbReference type="Rhea" id="RHEA-COMP:10001"/>
        <dbReference type="Rhea" id="RHEA-COMP:10152"/>
        <dbReference type="Rhea" id="RHEA-COMP:10282"/>
        <dbReference type="ChEBI" id="CHEBI:17319"/>
        <dbReference type="ChEBI" id="CHEBI:33737"/>
        <dbReference type="ChEBI" id="CHEBI:33738"/>
        <dbReference type="ChEBI" id="CHEBI:57844"/>
        <dbReference type="ChEBI" id="CHEBI:57856"/>
        <dbReference type="ChEBI" id="CHEBI:59789"/>
        <dbReference type="ChEBI" id="CHEBI:74411"/>
        <dbReference type="ChEBI" id="CHEBI:74497"/>
        <dbReference type="EC" id="2.1.1.192"/>
    </reaction>
</comment>
<comment type="catalytic activity">
    <reaction evidence="1">
        <text>adenosine(37) in tRNA + 2 reduced [2Fe-2S]-[ferredoxin] + 2 S-adenosyl-L-methionine = 2-methyladenosine(37) in tRNA + 5'-deoxyadenosine + L-methionine + 2 oxidized [2Fe-2S]-[ferredoxin] + S-adenosyl-L-homocysteine</text>
        <dbReference type="Rhea" id="RHEA:43332"/>
        <dbReference type="Rhea" id="RHEA-COMP:10000"/>
        <dbReference type="Rhea" id="RHEA-COMP:10001"/>
        <dbReference type="Rhea" id="RHEA-COMP:10162"/>
        <dbReference type="Rhea" id="RHEA-COMP:10485"/>
        <dbReference type="ChEBI" id="CHEBI:17319"/>
        <dbReference type="ChEBI" id="CHEBI:33737"/>
        <dbReference type="ChEBI" id="CHEBI:33738"/>
        <dbReference type="ChEBI" id="CHEBI:57844"/>
        <dbReference type="ChEBI" id="CHEBI:57856"/>
        <dbReference type="ChEBI" id="CHEBI:59789"/>
        <dbReference type="ChEBI" id="CHEBI:74411"/>
        <dbReference type="ChEBI" id="CHEBI:74497"/>
        <dbReference type="EC" id="2.1.1.192"/>
    </reaction>
</comment>
<comment type="cofactor">
    <cofactor evidence="1">
        <name>[4Fe-4S] cluster</name>
        <dbReference type="ChEBI" id="CHEBI:49883"/>
    </cofactor>
    <text evidence="1">Binds 1 [4Fe-4S] cluster. The cluster is coordinated with 3 cysteines and an exchangeable S-adenosyl-L-methionine.</text>
</comment>
<comment type="subcellular location">
    <subcellularLocation>
        <location evidence="1">Cytoplasm</location>
    </subcellularLocation>
</comment>
<comment type="miscellaneous">
    <text evidence="1">Reaction proceeds by a ping-pong mechanism involving intermediate methylation of a conserved cysteine residue.</text>
</comment>
<comment type="similarity">
    <text evidence="1">Belongs to the radical SAM superfamily. RlmN family.</text>
</comment>
<evidence type="ECO:0000255" key="1">
    <source>
        <dbReference type="HAMAP-Rule" id="MF_01849"/>
    </source>
</evidence>
<evidence type="ECO:0000255" key="2">
    <source>
        <dbReference type="PROSITE-ProRule" id="PRU01266"/>
    </source>
</evidence>
<organism>
    <name type="scientific">Chlorobium phaeobacteroides (strain DSM 266 / SMG 266 / 2430)</name>
    <dbReference type="NCBI Taxonomy" id="290317"/>
    <lineage>
        <taxon>Bacteria</taxon>
        <taxon>Pseudomonadati</taxon>
        <taxon>Chlorobiota</taxon>
        <taxon>Chlorobiia</taxon>
        <taxon>Chlorobiales</taxon>
        <taxon>Chlorobiaceae</taxon>
        <taxon>Chlorobium/Pelodictyon group</taxon>
        <taxon>Chlorobium</taxon>
    </lineage>
</organism>